<reference key="1">
    <citation type="journal article" date="2006" name="Proc. Natl. Acad. Sci. U.S.A.">
        <title>A molecular neuroethological approach for identifying and characterizing a cascade of behaviorally regulated genes.</title>
        <authorList>
            <person name="Wada K."/>
            <person name="Howard J.T."/>
            <person name="McConnell P."/>
            <person name="Whitney O."/>
            <person name="Lints T."/>
            <person name="Rivas M.V."/>
            <person name="Horita H."/>
            <person name="Patterson M.A."/>
            <person name="White S.A."/>
            <person name="Scharff C."/>
            <person name="Haesler S."/>
            <person name="Zhao S."/>
            <person name="Sakaguchi H."/>
            <person name="Hagiwara M."/>
            <person name="Shiraki T."/>
            <person name="Hirozane-Kishikawa T."/>
            <person name="Skene P."/>
            <person name="Hayashizaki Y."/>
            <person name="Carninci P."/>
            <person name="Jarvis E.D."/>
        </authorList>
    </citation>
    <scope>NUCLEOTIDE SEQUENCE [LARGE SCALE MRNA]</scope>
    <source>
        <tissue>Brain</tissue>
    </source>
</reference>
<dbReference type="EMBL" id="DQ213457">
    <property type="protein sequence ID" value="ACH43762.1"/>
    <property type="molecule type" value="mRNA"/>
</dbReference>
<dbReference type="EMBL" id="DQ213458">
    <property type="protein sequence ID" value="ACH43763.1"/>
    <property type="molecule type" value="mRNA"/>
</dbReference>
<dbReference type="RefSeq" id="NP_001157813.1">
    <property type="nucleotide sequence ID" value="NM_001164341.1"/>
</dbReference>
<dbReference type="RefSeq" id="XP_012424798.1">
    <property type="nucleotide sequence ID" value="XM_012569344.4"/>
</dbReference>
<dbReference type="RefSeq" id="XP_012424801.1">
    <property type="nucleotide sequence ID" value="XM_012569347.4"/>
</dbReference>
<dbReference type="SMR" id="B5FXK1"/>
<dbReference type="STRING" id="59729.ENSTGUP00000020707"/>
<dbReference type="Ensembl" id="ENSTGUT00000023655.1">
    <property type="protein sequence ID" value="ENSTGUP00000020707.1"/>
    <property type="gene ID" value="ENSTGUG00000022858.1"/>
</dbReference>
<dbReference type="GeneID" id="100190040"/>
<dbReference type="KEGG" id="tgu:100190040"/>
<dbReference type="CTD" id="56942"/>
<dbReference type="GeneTree" id="ENSGT00390000016908"/>
<dbReference type="HOGENOM" id="CLU_169286_2_0_1"/>
<dbReference type="InParanoid" id="B5FXK1"/>
<dbReference type="OMA" id="HSEKPIG"/>
<dbReference type="OrthoDB" id="532630at2759"/>
<dbReference type="TreeFam" id="TF314049"/>
<dbReference type="Proteomes" id="UP000007754">
    <property type="component" value="Chromosome 11"/>
</dbReference>
<dbReference type="GO" id="GO:0005829">
    <property type="term" value="C:cytosol"/>
    <property type="evidence" value="ECO:0007669"/>
    <property type="project" value="Ensembl"/>
</dbReference>
<dbReference type="GO" id="GO:0005739">
    <property type="term" value="C:mitochondrion"/>
    <property type="evidence" value="ECO:0007669"/>
    <property type="project" value="UniProtKB-SubCell"/>
</dbReference>
<dbReference type="InterPro" id="IPR013892">
    <property type="entry name" value="Cyt_c_biogenesis_Cmc1-like"/>
</dbReference>
<dbReference type="PANTHER" id="PTHR22977">
    <property type="entry name" value="COX ASSEMBLY MITOCHONDRIAL PROTEIN"/>
    <property type="match status" value="1"/>
</dbReference>
<dbReference type="PANTHER" id="PTHR22977:SF1">
    <property type="entry name" value="COX ASSEMBLY MITOCHONDRIAL PROTEIN 2 HOMOLOG"/>
    <property type="match status" value="1"/>
</dbReference>
<dbReference type="Pfam" id="PF08583">
    <property type="entry name" value="Cmc1"/>
    <property type="match status" value="1"/>
</dbReference>
<dbReference type="PROSITE" id="PS51808">
    <property type="entry name" value="CHCH"/>
    <property type="match status" value="1"/>
</dbReference>
<protein>
    <recommendedName>
        <fullName>COX assembly mitochondrial protein 2 homolog</fullName>
    </recommendedName>
</protein>
<feature type="chain" id="PRO_0000365088" description="COX assembly mitochondrial protein 2 homolog">
    <location>
        <begin position="1"/>
        <end position="75"/>
    </location>
</feature>
<feature type="domain" description="CHCH" evidence="2">
    <location>
        <begin position="11"/>
        <end position="55"/>
    </location>
</feature>
<feature type="short sequence motif" description="Cx9C motif 1" evidence="2">
    <location>
        <begin position="14"/>
        <end position="24"/>
    </location>
</feature>
<feature type="short sequence motif" description="Cx9C motif 2" evidence="2">
    <location>
        <begin position="37"/>
        <end position="47"/>
    </location>
</feature>
<feature type="disulfide bond" evidence="2">
    <location>
        <begin position="14"/>
        <end position="47"/>
    </location>
</feature>
<feature type="disulfide bond" evidence="2">
    <location>
        <begin position="24"/>
        <end position="37"/>
    </location>
</feature>
<comment type="function">
    <text evidence="1">May be involved in cytochrome c oxidase biogenesis.</text>
</comment>
<comment type="subcellular location">
    <subcellularLocation>
        <location evidence="1">Mitochondrion</location>
    </subcellularLocation>
</comment>
<comment type="similarity">
    <text evidence="3">Belongs to the CMC family.</text>
</comment>
<accession>B5FXK1</accession>
<name>COXM2_TAEGU</name>
<sequence>MHPDLSPHLHTEECNLIISLLKKCHKEHNVLKFFGHCNDIDREMRKCLKKEFEENRRRNREKRQRIINAHKASEK</sequence>
<gene>
    <name type="primary">CMC2</name>
</gene>
<keyword id="KW-1015">Disulfide bond</keyword>
<keyword id="KW-0496">Mitochondrion</keyword>
<keyword id="KW-1185">Reference proteome</keyword>
<evidence type="ECO:0000250" key="1"/>
<evidence type="ECO:0000255" key="2">
    <source>
        <dbReference type="PROSITE-ProRule" id="PRU01150"/>
    </source>
</evidence>
<evidence type="ECO:0000305" key="3"/>
<organism>
    <name type="scientific">Taeniopygia guttata</name>
    <name type="common">Zebra finch</name>
    <name type="synonym">Poephila guttata</name>
    <dbReference type="NCBI Taxonomy" id="59729"/>
    <lineage>
        <taxon>Eukaryota</taxon>
        <taxon>Metazoa</taxon>
        <taxon>Chordata</taxon>
        <taxon>Craniata</taxon>
        <taxon>Vertebrata</taxon>
        <taxon>Euteleostomi</taxon>
        <taxon>Archelosauria</taxon>
        <taxon>Archosauria</taxon>
        <taxon>Dinosauria</taxon>
        <taxon>Saurischia</taxon>
        <taxon>Theropoda</taxon>
        <taxon>Coelurosauria</taxon>
        <taxon>Aves</taxon>
        <taxon>Neognathae</taxon>
        <taxon>Neoaves</taxon>
        <taxon>Telluraves</taxon>
        <taxon>Australaves</taxon>
        <taxon>Passeriformes</taxon>
        <taxon>Passeroidea</taxon>
        <taxon>Estrildidae</taxon>
        <taxon>Estrildinae</taxon>
        <taxon>Taeniopygia</taxon>
    </lineage>
</organism>
<proteinExistence type="inferred from homology"/>